<comment type="function">
    <text evidence="2 6">Promotes cell proliferation (By similarity). Plays a role in tooth germ growth (By similarity). Plays a role in the control of enamel mineralization. Binds the AMBN promoter (PubMed:32167558).</text>
</comment>
<comment type="interaction">
    <interactant intactId="EBI-11175533">
        <id>Q3SY56</id>
    </interactant>
    <interactant intactId="EBI-1049597">
        <id>P27797</id>
        <label>CALR</label>
    </interactant>
    <organismsDiffer>false</organismsDiffer>
    <experiments>3</experiments>
</comment>
<comment type="interaction">
    <interactant intactId="EBI-11175533">
        <id>Q3SY56</id>
    </interactant>
    <interactant intactId="EBI-351007">
        <id>P36957</id>
        <label>DLST</label>
    </interactant>
    <organismsDiffer>false</organismsDiffer>
    <experiments>3</experiments>
</comment>
<comment type="interaction">
    <interactant intactId="EBI-11175533">
        <id>Q3SY56</id>
    </interactant>
    <interactant intactId="EBI-466029">
        <id>P42858</id>
        <label>HTT</label>
    </interactant>
    <organismsDiffer>false</organismsDiffer>
    <experiments>3</experiments>
</comment>
<comment type="interaction">
    <interactant intactId="EBI-11175533">
        <id>Q3SY56</id>
    </interactant>
    <interactant intactId="EBI-2339737">
        <id>Q96EH3</id>
        <label>MALSU1</label>
    </interactant>
    <organismsDiffer>false</organismsDiffer>
    <experiments>3</experiments>
</comment>
<comment type="interaction">
    <interactant intactId="EBI-11175533">
        <id>Q3SY56</id>
    </interactant>
    <interactant intactId="EBI-1055945">
        <id>Q8TDX7</id>
        <label>NEK7</label>
    </interactant>
    <organismsDiffer>false</organismsDiffer>
    <experiments>3</experiments>
</comment>
<comment type="interaction">
    <interactant intactId="EBI-11175533">
        <id>Q3SY56</id>
    </interactant>
    <interactant intactId="EBI-476586">
        <id>P17612</id>
        <label>PRKACA</label>
    </interactant>
    <organismsDiffer>false</organismsDiffer>
    <experiments>3</experiments>
</comment>
<comment type="interaction">
    <interactant intactId="EBI-11175533">
        <id>Q3SY56</id>
    </interactant>
    <interactant intactId="EBI-2010251">
        <id>P49810</id>
        <label>PSEN2</label>
    </interactant>
    <organismsDiffer>false</organismsDiffer>
    <experiments>3</experiments>
</comment>
<comment type="interaction">
    <interactant intactId="EBI-11175533">
        <id>Q3SY56</id>
    </interactant>
    <interactant intactId="EBI-990792">
        <id>P00441</id>
        <label>SOD1</label>
    </interactant>
    <organismsDiffer>false</organismsDiffer>
    <experiments>3</experiments>
</comment>
<comment type="interaction">
    <interactant intactId="EBI-11175533">
        <id>Q3SY56</id>
    </interactant>
    <interactant intactId="EBI-296151">
        <id>P37173</id>
        <label>TGFBR2</label>
    </interactant>
    <organismsDiffer>false</organismsDiffer>
    <experiments>3</experiments>
</comment>
<comment type="subcellular location">
    <subcellularLocation>
        <location evidence="1">Nucleus</location>
    </subcellularLocation>
</comment>
<comment type="tissue specificity">
    <text>Ubiquitous.</text>
</comment>
<comment type="domain">
    <text evidence="5">The 9aaTAD motif is a transactivation domain present in a large number of yeast and animal transcription factors.</text>
</comment>
<comment type="disease" evidence="6 7">
    <disease id="DI-06535">
        <name>Amelogenesis imperfecta 1K</name>
        <acronym>AI1K</acronym>
        <description>A form of amelogenesis imperfecta, a disorder characterized by defective enamel formation. The enamel may be hypoplastic, hypomineralized or both, and affected teeth may be discoloured, sensitive or prone to disintegration. AI1K is an autosomal dominant form characterized by hypoplastic enamel in all teeth.</description>
        <dbReference type="MIM" id="620104"/>
    </disease>
    <text>The disease is caused by variants affecting the gene represented in this entry.</text>
</comment>
<comment type="similarity">
    <text evidence="8">Belongs to the Sp1 C2H2-type zinc-finger protein family.</text>
</comment>
<name>SP6_HUMAN</name>
<organism>
    <name type="scientific">Homo sapiens</name>
    <name type="common">Human</name>
    <dbReference type="NCBI Taxonomy" id="9606"/>
    <lineage>
        <taxon>Eukaryota</taxon>
        <taxon>Metazoa</taxon>
        <taxon>Chordata</taxon>
        <taxon>Craniata</taxon>
        <taxon>Vertebrata</taxon>
        <taxon>Euteleostomi</taxon>
        <taxon>Mammalia</taxon>
        <taxon>Eutheria</taxon>
        <taxon>Euarchontoglires</taxon>
        <taxon>Primates</taxon>
        <taxon>Haplorrhini</taxon>
        <taxon>Catarrhini</taxon>
        <taxon>Hominidae</taxon>
        <taxon>Homo</taxon>
    </lineage>
</organism>
<accession>Q3SY56</accession>
<accession>B3KXS4</accession>
<keyword id="KW-0986">Amelogenesis imperfecta</keyword>
<keyword id="KW-0225">Disease variant</keyword>
<keyword id="KW-0238">DNA-binding</keyword>
<keyword id="KW-0479">Metal-binding</keyword>
<keyword id="KW-0539">Nucleus</keyword>
<keyword id="KW-1267">Proteomics identification</keyword>
<keyword id="KW-1185">Reference proteome</keyword>
<keyword id="KW-0677">Repeat</keyword>
<keyword id="KW-0804">Transcription</keyword>
<keyword id="KW-0805">Transcription regulation</keyword>
<keyword id="KW-0862">Zinc</keyword>
<keyword id="KW-0863">Zinc-finger</keyword>
<protein>
    <recommendedName>
        <fullName>Transcription factor Sp6</fullName>
    </recommendedName>
    <alternativeName>
        <fullName>Krueppel-like factor 14</fullName>
    </alternativeName>
</protein>
<evidence type="ECO:0000250" key="1"/>
<evidence type="ECO:0000250" key="2">
    <source>
        <dbReference type="UniProtKB" id="Q9ESX2"/>
    </source>
</evidence>
<evidence type="ECO:0000255" key="3">
    <source>
        <dbReference type="PROSITE-ProRule" id="PRU00042"/>
    </source>
</evidence>
<evidence type="ECO:0000256" key="4">
    <source>
        <dbReference type="SAM" id="MobiDB-lite"/>
    </source>
</evidence>
<evidence type="ECO:0000269" key="5">
    <source>
    </source>
</evidence>
<evidence type="ECO:0000269" key="6">
    <source>
    </source>
</evidence>
<evidence type="ECO:0000269" key="7">
    <source>
    </source>
</evidence>
<evidence type="ECO:0000305" key="8"/>
<proteinExistence type="evidence at protein level"/>
<feature type="chain" id="PRO_0000047148" description="Transcription factor Sp6">
    <location>
        <begin position="1"/>
        <end position="376"/>
    </location>
</feature>
<feature type="zinc finger region" description="C2H2-type 1" evidence="3">
    <location>
        <begin position="254"/>
        <end position="278"/>
    </location>
</feature>
<feature type="zinc finger region" description="C2H2-type 2" evidence="3">
    <location>
        <begin position="284"/>
        <end position="308"/>
    </location>
</feature>
<feature type="zinc finger region" description="C2H2-type 3" evidence="3">
    <location>
        <begin position="314"/>
        <end position="336"/>
    </location>
</feature>
<feature type="region of interest" description="Disordered" evidence="4">
    <location>
        <begin position="1"/>
        <end position="70"/>
    </location>
</feature>
<feature type="region of interest" description="Disordered" evidence="4">
    <location>
        <begin position="167"/>
        <end position="223"/>
    </location>
</feature>
<feature type="region of interest" description="Disordered" evidence="4">
    <location>
        <begin position="333"/>
        <end position="376"/>
    </location>
</feature>
<feature type="short sequence motif" description="9aaTAD" evidence="5">
    <location>
        <begin position="118"/>
        <end position="126"/>
    </location>
</feature>
<feature type="compositionally biased region" description="Low complexity" evidence="4">
    <location>
        <begin position="173"/>
        <end position="186"/>
    </location>
</feature>
<feature type="compositionally biased region" description="Basic and acidic residues" evidence="4">
    <location>
        <begin position="333"/>
        <end position="343"/>
    </location>
</feature>
<feature type="sequence variant" id="VAR_052714" description="In dbSNP:rs34309518.">
    <original>V</original>
    <variation>I</variation>
    <location>
        <position position="156"/>
    </location>
</feature>
<feature type="sequence variant" id="VAR_087744" description="In AI1K; decreased binding to the AMBN promoter; requires 2 nucleotide substitutions." evidence="6">
    <original>A</original>
    <variation>K</variation>
    <location>
        <position position="273"/>
    </location>
</feature>
<feature type="sequence variant" id="VAR_087745" description="In AI1K; requires 2 nucleotide substitutions." evidence="7">
    <original>A</original>
    <variation>M</variation>
    <location>
        <position position="273"/>
    </location>
</feature>
<gene>
    <name type="primary">SP6</name>
    <name type="synonym">KLF14</name>
</gene>
<reference key="1">
    <citation type="journal article" date="2004" name="Nat. Genet.">
        <title>Complete sequencing and characterization of 21,243 full-length human cDNAs.</title>
        <authorList>
            <person name="Ota T."/>
            <person name="Suzuki Y."/>
            <person name="Nishikawa T."/>
            <person name="Otsuki T."/>
            <person name="Sugiyama T."/>
            <person name="Irie R."/>
            <person name="Wakamatsu A."/>
            <person name="Hayashi K."/>
            <person name="Sato H."/>
            <person name="Nagai K."/>
            <person name="Kimura K."/>
            <person name="Makita H."/>
            <person name="Sekine M."/>
            <person name="Obayashi M."/>
            <person name="Nishi T."/>
            <person name="Shibahara T."/>
            <person name="Tanaka T."/>
            <person name="Ishii S."/>
            <person name="Yamamoto J."/>
            <person name="Saito K."/>
            <person name="Kawai Y."/>
            <person name="Isono Y."/>
            <person name="Nakamura Y."/>
            <person name="Nagahari K."/>
            <person name="Murakami K."/>
            <person name="Yasuda T."/>
            <person name="Iwayanagi T."/>
            <person name="Wagatsuma M."/>
            <person name="Shiratori A."/>
            <person name="Sudo H."/>
            <person name="Hosoiri T."/>
            <person name="Kaku Y."/>
            <person name="Kodaira H."/>
            <person name="Kondo H."/>
            <person name="Sugawara M."/>
            <person name="Takahashi M."/>
            <person name="Kanda K."/>
            <person name="Yokoi T."/>
            <person name="Furuya T."/>
            <person name="Kikkawa E."/>
            <person name="Omura Y."/>
            <person name="Abe K."/>
            <person name="Kamihara K."/>
            <person name="Katsuta N."/>
            <person name="Sato K."/>
            <person name="Tanikawa M."/>
            <person name="Yamazaki M."/>
            <person name="Ninomiya K."/>
            <person name="Ishibashi T."/>
            <person name="Yamashita H."/>
            <person name="Murakawa K."/>
            <person name="Fujimori K."/>
            <person name="Tanai H."/>
            <person name="Kimata M."/>
            <person name="Watanabe M."/>
            <person name="Hiraoka S."/>
            <person name="Chiba Y."/>
            <person name="Ishida S."/>
            <person name="Ono Y."/>
            <person name="Takiguchi S."/>
            <person name="Watanabe S."/>
            <person name="Yosida M."/>
            <person name="Hotuta T."/>
            <person name="Kusano J."/>
            <person name="Kanehori K."/>
            <person name="Takahashi-Fujii A."/>
            <person name="Hara H."/>
            <person name="Tanase T.-O."/>
            <person name="Nomura Y."/>
            <person name="Togiya S."/>
            <person name="Komai F."/>
            <person name="Hara R."/>
            <person name="Takeuchi K."/>
            <person name="Arita M."/>
            <person name="Imose N."/>
            <person name="Musashino K."/>
            <person name="Yuuki H."/>
            <person name="Oshima A."/>
            <person name="Sasaki N."/>
            <person name="Aotsuka S."/>
            <person name="Yoshikawa Y."/>
            <person name="Matsunawa H."/>
            <person name="Ichihara T."/>
            <person name="Shiohata N."/>
            <person name="Sano S."/>
            <person name="Moriya S."/>
            <person name="Momiyama H."/>
            <person name="Satoh N."/>
            <person name="Takami S."/>
            <person name="Terashima Y."/>
            <person name="Suzuki O."/>
            <person name="Nakagawa S."/>
            <person name="Senoh A."/>
            <person name="Mizoguchi H."/>
            <person name="Goto Y."/>
            <person name="Shimizu F."/>
            <person name="Wakebe H."/>
            <person name="Hishigaki H."/>
            <person name="Watanabe T."/>
            <person name="Sugiyama A."/>
            <person name="Takemoto M."/>
            <person name="Kawakami B."/>
            <person name="Yamazaki M."/>
            <person name="Watanabe K."/>
            <person name="Kumagai A."/>
            <person name="Itakura S."/>
            <person name="Fukuzumi Y."/>
            <person name="Fujimori Y."/>
            <person name="Komiyama M."/>
            <person name="Tashiro H."/>
            <person name="Tanigami A."/>
            <person name="Fujiwara T."/>
            <person name="Ono T."/>
            <person name="Yamada K."/>
            <person name="Fujii Y."/>
            <person name="Ozaki K."/>
            <person name="Hirao M."/>
            <person name="Ohmori Y."/>
            <person name="Kawabata A."/>
            <person name="Hikiji T."/>
            <person name="Kobatake N."/>
            <person name="Inagaki H."/>
            <person name="Ikema Y."/>
            <person name="Okamoto S."/>
            <person name="Okitani R."/>
            <person name="Kawakami T."/>
            <person name="Noguchi S."/>
            <person name="Itoh T."/>
            <person name="Shigeta K."/>
            <person name="Senba T."/>
            <person name="Matsumura K."/>
            <person name="Nakajima Y."/>
            <person name="Mizuno T."/>
            <person name="Morinaga M."/>
            <person name="Sasaki M."/>
            <person name="Togashi T."/>
            <person name="Oyama M."/>
            <person name="Hata H."/>
            <person name="Watanabe M."/>
            <person name="Komatsu T."/>
            <person name="Mizushima-Sugano J."/>
            <person name="Satoh T."/>
            <person name="Shirai Y."/>
            <person name="Takahashi Y."/>
            <person name="Nakagawa K."/>
            <person name="Okumura K."/>
            <person name="Nagase T."/>
            <person name="Nomura N."/>
            <person name="Kikuchi H."/>
            <person name="Masuho Y."/>
            <person name="Yamashita R."/>
            <person name="Nakai K."/>
            <person name="Yada T."/>
            <person name="Nakamura Y."/>
            <person name="Ohara O."/>
            <person name="Isogai T."/>
            <person name="Sugano S."/>
        </authorList>
    </citation>
    <scope>NUCLEOTIDE SEQUENCE [LARGE SCALE MRNA]</scope>
    <source>
        <tissue>Placenta</tissue>
    </source>
</reference>
<reference key="2">
    <citation type="submission" date="2005-09" db="EMBL/GenBank/DDBJ databases">
        <authorList>
            <person name="Mural R.J."/>
            <person name="Istrail S."/>
            <person name="Sutton G.G."/>
            <person name="Florea L."/>
            <person name="Halpern A.L."/>
            <person name="Mobarry C.M."/>
            <person name="Lippert R."/>
            <person name="Walenz B."/>
            <person name="Shatkay H."/>
            <person name="Dew I."/>
            <person name="Miller J.R."/>
            <person name="Flanigan M.J."/>
            <person name="Edwards N.J."/>
            <person name="Bolanos R."/>
            <person name="Fasulo D."/>
            <person name="Halldorsson B.V."/>
            <person name="Hannenhalli S."/>
            <person name="Turner R."/>
            <person name="Yooseph S."/>
            <person name="Lu F."/>
            <person name="Nusskern D.R."/>
            <person name="Shue B.C."/>
            <person name="Zheng X.H."/>
            <person name="Zhong F."/>
            <person name="Delcher A.L."/>
            <person name="Huson D.H."/>
            <person name="Kravitz S.A."/>
            <person name="Mouchard L."/>
            <person name="Reinert K."/>
            <person name="Remington K.A."/>
            <person name="Clark A.G."/>
            <person name="Waterman M.S."/>
            <person name="Eichler E.E."/>
            <person name="Adams M.D."/>
            <person name="Hunkapiller M.W."/>
            <person name="Myers E.W."/>
            <person name="Venter J.C."/>
        </authorList>
    </citation>
    <scope>NUCLEOTIDE SEQUENCE [LARGE SCALE GENOMIC DNA]</scope>
</reference>
<reference key="3">
    <citation type="journal article" date="2004" name="Genome Res.">
        <title>The status, quality, and expansion of the NIH full-length cDNA project: the Mammalian Gene Collection (MGC).</title>
        <authorList>
            <consortium name="The MGC Project Team"/>
        </authorList>
    </citation>
    <scope>NUCLEOTIDE SEQUENCE [LARGE SCALE MRNA]</scope>
</reference>
<reference key="4">
    <citation type="journal article" date="2020" name="Cell. Mol. Life Sci.">
        <title>The evolution of the 9aaTAD domain in Sp2 proteins: inactivation with valines and intron reservoirs.</title>
        <authorList>
            <person name="Piskacek M."/>
            <person name="Havelka M."/>
            <person name="Jendruchova K."/>
            <person name="Knight A."/>
            <person name="Keegan L.P."/>
        </authorList>
    </citation>
    <scope>9AATAD MOTIF</scope>
</reference>
<reference key="5">
    <citation type="journal article" date="2020" name="Hum. Mol. Genet.">
        <title>A missense variant in specificity protein 6 (SP6) is associated with amelogenesis imperfecta.</title>
        <authorList>
            <person name="Smith C.E.L."/>
            <person name="Whitehouse L.L.E."/>
            <person name="Poulter J.A."/>
            <person name="Wilkinson Hewitt L."/>
            <person name="Nadat F."/>
            <person name="Jackson B.R."/>
            <person name="Manfield I.W."/>
            <person name="Edwards T.A."/>
            <person name="Rodd H.D."/>
            <person name="Inglehearn C.F."/>
            <person name="Mighell A.J."/>
        </authorList>
    </citation>
    <scope>VARIANT AI1K LYS-273</scope>
    <scope>CHARACTERIZATION OF VARIANT AI1K LYS-273</scope>
    <scope>INVOLVEMENT IN AI1K</scope>
    <scope>FUNCTION</scope>
</reference>
<reference key="6">
    <citation type="journal article" date="2021" name="Genes (Basel)">
        <title>A Novel De Novo SP6 Mutation Causes Severe Hypoplastic Amelogenesis Imperfecta.</title>
        <authorList>
            <person name="Kim Y.J."/>
            <person name="Lee Y."/>
            <person name="Zhang H."/>
            <person name="Song J.S."/>
            <person name="Hu J.C."/>
            <person name="Simmer J.P."/>
            <person name="Kim J.W."/>
        </authorList>
    </citation>
    <scope>VARIANT AI1K MET-273</scope>
    <scope>INVOLVEMENT IN AI1K</scope>
</reference>
<sequence length="376" mass="39840">MLTAVCGSLGSQHTEAPHASPPRLDLQPLQTYQGHTSPEAGDYPSPLQPGELQSLPLGPEVDFSQGYELPGASSRVTCEDLESDSPLAPGPFSKLLQPDMSHHYESWFRPTHPGAEDGSWWDLHPGTSWMDLPHTQGALTSPGHPGALQAGLGGYVGDHQLCAPPPHPHAHHLLPAAGGQHLLGPPDGAKALEVAAPESQGLDSSLDGAARPKGSRRSVPRSSGQTVCRCPNCLEAERLGAPCGPDGGKKKHLHNCHIPGCGKAYAKTSHLKAHLRWHSGDRPFVCNWLFCGKRFTRSDELQRHLQTHTGTKKFPCAVCSRVFMRSDHLAKHMKTHEGAKEEAAGAASGEGKAGGAVEPPGGKGKREAEGSVAPSN</sequence>
<dbReference type="EMBL" id="AK127850">
    <property type="protein sequence ID" value="BAG54586.1"/>
    <property type="molecule type" value="mRNA"/>
</dbReference>
<dbReference type="EMBL" id="CH471109">
    <property type="protein sequence ID" value="EAW94789.1"/>
    <property type="molecule type" value="Genomic_DNA"/>
</dbReference>
<dbReference type="EMBL" id="BC103951">
    <property type="protein sequence ID" value="AAI03952.1"/>
    <property type="molecule type" value="mRNA"/>
</dbReference>
<dbReference type="EMBL" id="BC103952">
    <property type="protein sequence ID" value="AAI03953.1"/>
    <property type="molecule type" value="mRNA"/>
</dbReference>
<dbReference type="EMBL" id="BC103953">
    <property type="protein sequence ID" value="AAI03954.1"/>
    <property type="molecule type" value="mRNA"/>
</dbReference>
<dbReference type="EMBL" id="BC103954">
    <property type="protein sequence ID" value="AAI03955.1"/>
    <property type="molecule type" value="mRNA"/>
</dbReference>
<dbReference type="CCDS" id="CCDS11520.1"/>
<dbReference type="RefSeq" id="NP_001245177.1">
    <property type="nucleotide sequence ID" value="NM_001258248.2"/>
</dbReference>
<dbReference type="RefSeq" id="NP_954871.1">
    <property type="nucleotide sequence ID" value="NM_199262.3"/>
</dbReference>
<dbReference type="RefSeq" id="XP_006722178.1">
    <property type="nucleotide sequence ID" value="XM_006722115.4"/>
</dbReference>
<dbReference type="RefSeq" id="XP_054173385.1">
    <property type="nucleotide sequence ID" value="XM_054317410.1"/>
</dbReference>
<dbReference type="BioGRID" id="123233">
    <property type="interactions" value="21"/>
</dbReference>
<dbReference type="FunCoup" id="Q3SY56">
    <property type="interactions" value="228"/>
</dbReference>
<dbReference type="IntAct" id="Q3SY56">
    <property type="interactions" value="30"/>
</dbReference>
<dbReference type="MINT" id="Q3SY56"/>
<dbReference type="STRING" id="9606.ENSP00000438209"/>
<dbReference type="GlyGen" id="Q3SY56">
    <property type="glycosylation" value="1 site"/>
</dbReference>
<dbReference type="iPTMnet" id="Q3SY56"/>
<dbReference type="PhosphoSitePlus" id="Q3SY56"/>
<dbReference type="BioMuta" id="SP6"/>
<dbReference type="DMDM" id="82582258"/>
<dbReference type="jPOST" id="Q3SY56"/>
<dbReference type="MassIVE" id="Q3SY56"/>
<dbReference type="PaxDb" id="9606-ENSP00000438209"/>
<dbReference type="PeptideAtlas" id="Q3SY56"/>
<dbReference type="ProteomicsDB" id="61841"/>
<dbReference type="Antibodypedia" id="30206">
    <property type="antibodies" value="164 antibodies from 24 providers"/>
</dbReference>
<dbReference type="DNASU" id="80320"/>
<dbReference type="Ensembl" id="ENST00000342234.3">
    <property type="protein sequence ID" value="ENSP00000340799.2"/>
    <property type="gene ID" value="ENSG00000189120.5"/>
</dbReference>
<dbReference type="Ensembl" id="ENST00000536300.2">
    <property type="protein sequence ID" value="ENSP00000438209.1"/>
    <property type="gene ID" value="ENSG00000189120.5"/>
</dbReference>
<dbReference type="GeneID" id="80320"/>
<dbReference type="KEGG" id="hsa:80320"/>
<dbReference type="MANE-Select" id="ENST00000536300.2">
    <property type="protein sequence ID" value="ENSP00000438209.1"/>
    <property type="RefSeq nucleotide sequence ID" value="NM_001258248.2"/>
    <property type="RefSeq protein sequence ID" value="NP_001245177.1"/>
</dbReference>
<dbReference type="UCSC" id="uc002img.3">
    <property type="organism name" value="human"/>
</dbReference>
<dbReference type="AGR" id="HGNC:14530"/>
<dbReference type="CTD" id="80320"/>
<dbReference type="DisGeNET" id="80320"/>
<dbReference type="GeneCards" id="SP6"/>
<dbReference type="HGNC" id="HGNC:14530">
    <property type="gene designation" value="SP6"/>
</dbReference>
<dbReference type="HPA" id="ENSG00000189120">
    <property type="expression patterns" value="Tissue enhanced (placenta, skin)"/>
</dbReference>
<dbReference type="MalaCards" id="SP6"/>
<dbReference type="MIM" id="608613">
    <property type="type" value="gene"/>
</dbReference>
<dbReference type="MIM" id="620104">
    <property type="type" value="phenotype"/>
</dbReference>
<dbReference type="neXtProt" id="NX_Q3SY56"/>
<dbReference type="OpenTargets" id="ENSG00000189120"/>
<dbReference type="Orphanet" id="100031">
    <property type="disease" value="Hypoplastic amelogenesis imperfecta"/>
</dbReference>
<dbReference type="PharmGKB" id="PA37892"/>
<dbReference type="VEuPathDB" id="HostDB:ENSG00000189120"/>
<dbReference type="eggNOG" id="KOG1721">
    <property type="taxonomic scope" value="Eukaryota"/>
</dbReference>
<dbReference type="GeneTree" id="ENSGT00940000161498"/>
<dbReference type="HOGENOM" id="CLU_019484_0_0_1"/>
<dbReference type="InParanoid" id="Q3SY56"/>
<dbReference type="OMA" id="HGPPRLE"/>
<dbReference type="OrthoDB" id="6365676at2759"/>
<dbReference type="PAN-GO" id="Q3SY56">
    <property type="GO annotations" value="3 GO annotations based on evolutionary models"/>
</dbReference>
<dbReference type="PhylomeDB" id="Q3SY56"/>
<dbReference type="TreeFam" id="TF315506"/>
<dbReference type="PathwayCommons" id="Q3SY56"/>
<dbReference type="SignaLink" id="Q3SY56"/>
<dbReference type="SIGNOR" id="Q3SY56"/>
<dbReference type="BioGRID-ORCS" id="80320">
    <property type="hits" value="18 hits in 1177 CRISPR screens"/>
</dbReference>
<dbReference type="ChiTaRS" id="SP6">
    <property type="organism name" value="human"/>
</dbReference>
<dbReference type="GenomeRNAi" id="80320"/>
<dbReference type="Pharos" id="Q3SY56">
    <property type="development level" value="Tbio"/>
</dbReference>
<dbReference type="PRO" id="PR:Q3SY56"/>
<dbReference type="Proteomes" id="UP000005640">
    <property type="component" value="Chromosome 17"/>
</dbReference>
<dbReference type="RNAct" id="Q3SY56">
    <property type="molecule type" value="protein"/>
</dbReference>
<dbReference type="Bgee" id="ENSG00000189120">
    <property type="expression patterns" value="Expressed in lower esophagus mucosa and 110 other cell types or tissues"/>
</dbReference>
<dbReference type="GO" id="GO:0000785">
    <property type="term" value="C:chromatin"/>
    <property type="evidence" value="ECO:0000247"/>
    <property type="project" value="NTNU_SB"/>
</dbReference>
<dbReference type="GO" id="GO:0005829">
    <property type="term" value="C:cytosol"/>
    <property type="evidence" value="ECO:0007669"/>
    <property type="project" value="Ensembl"/>
</dbReference>
<dbReference type="GO" id="GO:0005634">
    <property type="term" value="C:nucleus"/>
    <property type="evidence" value="ECO:0007669"/>
    <property type="project" value="UniProtKB-SubCell"/>
</dbReference>
<dbReference type="GO" id="GO:0000981">
    <property type="term" value="F:DNA-binding transcription factor activity, RNA polymerase II-specific"/>
    <property type="evidence" value="ECO:0000247"/>
    <property type="project" value="NTNU_SB"/>
</dbReference>
<dbReference type="GO" id="GO:0000978">
    <property type="term" value="F:RNA polymerase II cis-regulatory region sequence-specific DNA binding"/>
    <property type="evidence" value="ECO:0000318"/>
    <property type="project" value="GO_Central"/>
</dbReference>
<dbReference type="GO" id="GO:0008270">
    <property type="term" value="F:zinc ion binding"/>
    <property type="evidence" value="ECO:0007669"/>
    <property type="project" value="UniProtKB-KW"/>
</dbReference>
<dbReference type="GO" id="GO:0001837">
    <property type="term" value="P:epithelial to mesenchymal transition"/>
    <property type="evidence" value="ECO:0007669"/>
    <property type="project" value="Ensembl"/>
</dbReference>
<dbReference type="GO" id="GO:0042476">
    <property type="term" value="P:odontogenesis"/>
    <property type="evidence" value="ECO:0007669"/>
    <property type="project" value="Ensembl"/>
</dbReference>
<dbReference type="GO" id="GO:0042481">
    <property type="term" value="P:regulation of odontogenesis"/>
    <property type="evidence" value="ECO:0007669"/>
    <property type="project" value="Ensembl"/>
</dbReference>
<dbReference type="GO" id="GO:0006357">
    <property type="term" value="P:regulation of transcription by RNA polymerase II"/>
    <property type="evidence" value="ECO:0000318"/>
    <property type="project" value="GO_Central"/>
</dbReference>
<dbReference type="CDD" id="cd22544">
    <property type="entry name" value="SP6_N"/>
    <property type="match status" value="1"/>
</dbReference>
<dbReference type="FunFam" id="3.30.160.60:FF:001147">
    <property type="entry name" value="Sp6 transcription factor"/>
    <property type="match status" value="1"/>
</dbReference>
<dbReference type="FunFam" id="3.30.160.60:FF:000077">
    <property type="entry name" value="Sp8 transcription factor"/>
    <property type="match status" value="1"/>
</dbReference>
<dbReference type="FunFam" id="3.30.160.60:FF:000014">
    <property type="entry name" value="Transcription factor Sp3"/>
    <property type="match status" value="1"/>
</dbReference>
<dbReference type="Gene3D" id="3.30.160.60">
    <property type="entry name" value="Classic Zinc Finger"/>
    <property type="match status" value="3"/>
</dbReference>
<dbReference type="InterPro" id="IPR036236">
    <property type="entry name" value="Znf_C2H2_sf"/>
</dbReference>
<dbReference type="InterPro" id="IPR013087">
    <property type="entry name" value="Znf_C2H2_type"/>
</dbReference>
<dbReference type="PANTHER" id="PTHR23235">
    <property type="entry name" value="KRUEPPEL-LIKE TRANSCRIPTION FACTOR"/>
    <property type="match status" value="1"/>
</dbReference>
<dbReference type="PANTHER" id="PTHR23235:SF23">
    <property type="entry name" value="TRANSCRIPTION FACTOR SP6"/>
    <property type="match status" value="1"/>
</dbReference>
<dbReference type="Pfam" id="PF00096">
    <property type="entry name" value="zf-C2H2"/>
    <property type="match status" value="3"/>
</dbReference>
<dbReference type="SMART" id="SM00355">
    <property type="entry name" value="ZnF_C2H2"/>
    <property type="match status" value="3"/>
</dbReference>
<dbReference type="SUPFAM" id="SSF57667">
    <property type="entry name" value="beta-beta-alpha zinc fingers"/>
    <property type="match status" value="2"/>
</dbReference>
<dbReference type="PROSITE" id="PS00028">
    <property type="entry name" value="ZINC_FINGER_C2H2_1"/>
    <property type="match status" value="3"/>
</dbReference>
<dbReference type="PROSITE" id="PS50157">
    <property type="entry name" value="ZINC_FINGER_C2H2_2"/>
    <property type="match status" value="3"/>
</dbReference>